<gene>
    <name type="ordered locus">MA_0963</name>
</gene>
<proteinExistence type="inferred from homology"/>
<reference key="1">
    <citation type="journal article" date="2002" name="Genome Res.">
        <title>The genome of Methanosarcina acetivorans reveals extensive metabolic and physiological diversity.</title>
        <authorList>
            <person name="Galagan J.E."/>
            <person name="Nusbaum C."/>
            <person name="Roy A."/>
            <person name="Endrizzi M.G."/>
            <person name="Macdonald P."/>
            <person name="FitzHugh W."/>
            <person name="Calvo S."/>
            <person name="Engels R."/>
            <person name="Smirnov S."/>
            <person name="Atnoor D."/>
            <person name="Brown A."/>
            <person name="Allen N."/>
            <person name="Naylor J."/>
            <person name="Stange-Thomann N."/>
            <person name="DeArellano K."/>
            <person name="Johnson R."/>
            <person name="Linton L."/>
            <person name="McEwan P."/>
            <person name="McKernan K."/>
            <person name="Talamas J."/>
            <person name="Tirrell A."/>
            <person name="Ye W."/>
            <person name="Zimmer A."/>
            <person name="Barber R.D."/>
            <person name="Cann I."/>
            <person name="Graham D.E."/>
            <person name="Grahame D.A."/>
            <person name="Guss A.M."/>
            <person name="Hedderich R."/>
            <person name="Ingram-Smith C."/>
            <person name="Kuettner H.C."/>
            <person name="Krzycki J.A."/>
            <person name="Leigh J.A."/>
            <person name="Li W."/>
            <person name="Liu J."/>
            <person name="Mukhopadhyay B."/>
            <person name="Reeve J.N."/>
            <person name="Smith K."/>
            <person name="Springer T.A."/>
            <person name="Umayam L.A."/>
            <person name="White O."/>
            <person name="White R.H."/>
            <person name="de Macario E.C."/>
            <person name="Ferry J.G."/>
            <person name="Jarrell K.F."/>
            <person name="Jing H."/>
            <person name="Macario A.J.L."/>
            <person name="Paulsen I.T."/>
            <person name="Pritchett M."/>
            <person name="Sowers K.R."/>
            <person name="Swanson R.V."/>
            <person name="Zinder S.H."/>
            <person name="Lander E."/>
            <person name="Metcalf W.W."/>
            <person name="Birren B."/>
        </authorList>
    </citation>
    <scope>NUCLEOTIDE SEQUENCE [LARGE SCALE GENOMIC DNA]</scope>
    <source>
        <strain>ATCC 35395 / DSM 2834 / JCM 12185 / C2A</strain>
    </source>
</reference>
<evidence type="ECO:0000255" key="1">
    <source>
        <dbReference type="HAMAP-Rule" id="MF_01078"/>
    </source>
</evidence>
<evidence type="ECO:0000256" key="2">
    <source>
        <dbReference type="SAM" id="MobiDB-lite"/>
    </source>
</evidence>
<accession>Q8TS42</accession>
<feature type="chain" id="PRO_0000136078" description="RNA-free ribonuclease P">
    <location>
        <begin position="1"/>
        <end position="247"/>
    </location>
</feature>
<feature type="region of interest" description="Disordered" evidence="2">
    <location>
        <begin position="223"/>
        <end position="247"/>
    </location>
</feature>
<sequence length="247" mass="28412">MLKQRFVLDTTALTDLQTREVMGYTSLCEGMKAILDLIADARLQFGISCYVPYPSVYKEMYEFASRNGCDREVTAKIDTWLVKKAPDRYRVDVTSQIFHEYVSYMRERINRGMGVAEDAIWEAATECLFMENPQNKKKEYREEVEREVIGGIIGKFRNKYRAALRYGILDSAPDIDVLILAKELDAAVVASDYGIEKWAEQLGVRFVPANTFPMMIKEYLKHSPEGEKEKGEADKKKKSHSEEAEFI</sequence>
<dbReference type="EC" id="3.1.26.5" evidence="1"/>
<dbReference type="EMBL" id="AE010299">
    <property type="protein sequence ID" value="AAM04396.1"/>
    <property type="molecule type" value="Genomic_DNA"/>
</dbReference>
<dbReference type="RefSeq" id="WP_011021001.1">
    <property type="nucleotide sequence ID" value="NC_003552.1"/>
</dbReference>
<dbReference type="SMR" id="Q8TS42"/>
<dbReference type="STRING" id="188937.MA_0963"/>
<dbReference type="EnsemblBacteria" id="AAM04396">
    <property type="protein sequence ID" value="AAM04396"/>
    <property type="gene ID" value="MA_0963"/>
</dbReference>
<dbReference type="GeneID" id="1472853"/>
<dbReference type="KEGG" id="mac:MA_0963"/>
<dbReference type="HOGENOM" id="CLU_109672_0_0_2"/>
<dbReference type="InParanoid" id="Q8TS42"/>
<dbReference type="OrthoDB" id="95197at2157"/>
<dbReference type="PhylomeDB" id="Q8TS42"/>
<dbReference type="Proteomes" id="UP000002487">
    <property type="component" value="Chromosome"/>
</dbReference>
<dbReference type="GO" id="GO:0004526">
    <property type="term" value="F:ribonuclease P activity"/>
    <property type="evidence" value="ECO:0007669"/>
    <property type="project" value="UniProtKB-UniRule"/>
</dbReference>
<dbReference type="GO" id="GO:0001682">
    <property type="term" value="P:tRNA 5'-leader removal"/>
    <property type="evidence" value="ECO:0007669"/>
    <property type="project" value="UniProtKB-UniRule"/>
</dbReference>
<dbReference type="CDD" id="cd18691">
    <property type="entry name" value="PIN_VapC-like"/>
    <property type="match status" value="1"/>
</dbReference>
<dbReference type="HAMAP" id="MF_01078">
    <property type="entry name" value="RNA_free_RNase_P"/>
    <property type="match status" value="1"/>
</dbReference>
<dbReference type="InterPro" id="IPR014856">
    <property type="entry name" value="RNA_free_RNase_P"/>
</dbReference>
<dbReference type="NCBIfam" id="NF003343">
    <property type="entry name" value="PRK04358.1-4"/>
    <property type="match status" value="1"/>
</dbReference>
<dbReference type="NCBIfam" id="TIGR03875">
    <property type="entry name" value="RNA_lig_partner"/>
    <property type="match status" value="1"/>
</dbReference>
<dbReference type="PANTHER" id="PTHR41173:SF1">
    <property type="entry name" value="RNA-FREE RIBONUCLEASE P"/>
    <property type="match status" value="1"/>
</dbReference>
<dbReference type="PANTHER" id="PTHR41173">
    <property type="entry name" value="UPF0278 PROTEIN TK1425"/>
    <property type="match status" value="1"/>
</dbReference>
<dbReference type="Pfam" id="PF08745">
    <property type="entry name" value="PIN_5"/>
    <property type="match status" value="1"/>
</dbReference>
<organism>
    <name type="scientific">Methanosarcina acetivorans (strain ATCC 35395 / DSM 2834 / JCM 12185 / C2A)</name>
    <dbReference type="NCBI Taxonomy" id="188937"/>
    <lineage>
        <taxon>Archaea</taxon>
        <taxon>Methanobacteriati</taxon>
        <taxon>Methanobacteriota</taxon>
        <taxon>Stenosarchaea group</taxon>
        <taxon>Methanomicrobia</taxon>
        <taxon>Methanosarcinales</taxon>
        <taxon>Methanosarcinaceae</taxon>
        <taxon>Methanosarcina</taxon>
    </lineage>
</organism>
<keyword id="KW-0255">Endonuclease</keyword>
<keyword id="KW-0378">Hydrolase</keyword>
<keyword id="KW-0540">Nuclease</keyword>
<keyword id="KW-1185">Reference proteome</keyword>
<keyword id="KW-0819">tRNA processing</keyword>
<name>RFRNP_METAC</name>
<protein>
    <recommendedName>
        <fullName evidence="1">RNA-free ribonuclease P</fullName>
        <shortName evidence="1">RNA-free RNase P</shortName>
        <ecNumber evidence="1">3.1.26.5</ecNumber>
    </recommendedName>
    <alternativeName>
        <fullName evidence="1">Protein-only RNase P</fullName>
    </alternativeName>
</protein>
<comment type="function">
    <text evidence="1">RNA-free RNase P that catalyzes the removal of the 5'-leader sequence from pre-tRNA to produce the mature 5'-terminus.</text>
</comment>
<comment type="catalytic activity">
    <reaction evidence="1">
        <text>Endonucleolytic cleavage of RNA, removing 5'-extranucleotides from tRNA precursor.</text>
        <dbReference type="EC" id="3.1.26.5"/>
    </reaction>
</comment>
<comment type="similarity">
    <text evidence="1">Belongs to the HARP family.</text>
</comment>